<comment type="catalytic activity">
    <reaction evidence="1">
        <text>L-cysteine + L-glutamate + ATP = gamma-L-glutamyl-L-cysteine + ADP + phosphate + H(+)</text>
        <dbReference type="Rhea" id="RHEA:13285"/>
        <dbReference type="ChEBI" id="CHEBI:15378"/>
        <dbReference type="ChEBI" id="CHEBI:29985"/>
        <dbReference type="ChEBI" id="CHEBI:30616"/>
        <dbReference type="ChEBI" id="CHEBI:35235"/>
        <dbReference type="ChEBI" id="CHEBI:43474"/>
        <dbReference type="ChEBI" id="CHEBI:58173"/>
        <dbReference type="ChEBI" id="CHEBI:456216"/>
        <dbReference type="EC" id="6.3.2.2"/>
    </reaction>
</comment>
<comment type="pathway">
    <text evidence="1">Sulfur metabolism; glutathione biosynthesis; glutathione from L-cysteine and L-glutamate: step 1/2.</text>
</comment>
<comment type="similarity">
    <text evidence="1">Belongs to the glutamate--cysteine ligase type 1 family. Type 1 subfamily.</text>
</comment>
<organism>
    <name type="scientific">Pseudomonas fluorescens (strain ATCC BAA-477 / NRRL B-23932 / Pf-5)</name>
    <dbReference type="NCBI Taxonomy" id="220664"/>
    <lineage>
        <taxon>Bacteria</taxon>
        <taxon>Pseudomonadati</taxon>
        <taxon>Pseudomonadota</taxon>
        <taxon>Gammaproteobacteria</taxon>
        <taxon>Pseudomonadales</taxon>
        <taxon>Pseudomonadaceae</taxon>
        <taxon>Pseudomonas</taxon>
    </lineage>
</organism>
<accession>Q4KK14</accession>
<proteinExistence type="inferred from homology"/>
<name>GSH1_PSEF5</name>
<sequence>MKESNLSELLNRRLALLGERANLSLLEQCLHGIERECLRVTGEGRLAQTPHPEELGSALTNEQITTDYSESLLEFITPALKDPADTLASLDKIHRFAYSKLGNEYLWSPSMPCPLPAEEDIPIAYYGTSNIGQLKYVYRKGLALRYGKTMQCIAGIHYNFSLPEQLWPLLKQAEGFVGTDRDYQSSAYIALIRNFRRYSWLLMYLFGASPALDAGFLRGRSHQLEQLDAETLYLPYATSLRMSDLGYQSKAQAGLTPCYNDLNSYTDSLRKAVATPYAPYVEVGTHKDGEWVQLNTNILQIENEYYSNIRPKRVTYTGERPIQALMARGIQYVEVRCLDINPFLPLGIDIQEARFLDAFLLYCALNDSPLFENNECGNATSNFLAVVKEGRRPGLQLQRQGQPVEMKEWAAQLLEQIAPLAALLDQSHGSDVHSKALDAQLAKVKDSSLTPSAQVLAAMSEHKESFTQFSLRQSQAHAEYFRSQTLSKEEQAAFEEAARKSLEQQTELEQNEVGDFDVFVGAYQASILAISN</sequence>
<feature type="chain" id="PRO_1000025180" description="Glutamate--cysteine ligase">
    <location>
        <begin position="1"/>
        <end position="532"/>
    </location>
</feature>
<protein>
    <recommendedName>
        <fullName evidence="1">Glutamate--cysteine ligase</fullName>
        <ecNumber evidence="1">6.3.2.2</ecNumber>
    </recommendedName>
    <alternativeName>
        <fullName evidence="1">Gamma-ECS</fullName>
        <shortName evidence="1">GCS</shortName>
    </alternativeName>
    <alternativeName>
        <fullName evidence="1">Gamma-glutamylcysteine synthetase</fullName>
    </alternativeName>
</protein>
<reference key="1">
    <citation type="journal article" date="2005" name="Nat. Biotechnol.">
        <title>Complete genome sequence of the plant commensal Pseudomonas fluorescens Pf-5.</title>
        <authorList>
            <person name="Paulsen I.T."/>
            <person name="Press C.M."/>
            <person name="Ravel J."/>
            <person name="Kobayashi D.Y."/>
            <person name="Myers G.S.A."/>
            <person name="Mavrodi D.V."/>
            <person name="DeBoy R.T."/>
            <person name="Seshadri R."/>
            <person name="Ren Q."/>
            <person name="Madupu R."/>
            <person name="Dodson R.J."/>
            <person name="Durkin A.S."/>
            <person name="Brinkac L.M."/>
            <person name="Daugherty S.C."/>
            <person name="Sullivan S.A."/>
            <person name="Rosovitz M.J."/>
            <person name="Gwinn M.L."/>
            <person name="Zhou L."/>
            <person name="Schneider D.J."/>
            <person name="Cartinhour S.W."/>
            <person name="Nelson W.C."/>
            <person name="Weidman J."/>
            <person name="Watkins K."/>
            <person name="Tran K."/>
            <person name="Khouri H."/>
            <person name="Pierson E.A."/>
            <person name="Pierson L.S. III"/>
            <person name="Thomashow L.S."/>
            <person name="Loper J.E."/>
        </authorList>
    </citation>
    <scope>NUCLEOTIDE SEQUENCE [LARGE SCALE GENOMIC DNA]</scope>
    <source>
        <strain>ATCC BAA-477 / NRRL B-23932 / Pf-5</strain>
    </source>
</reference>
<keyword id="KW-0067">ATP-binding</keyword>
<keyword id="KW-0317">Glutathione biosynthesis</keyword>
<keyword id="KW-0436">Ligase</keyword>
<keyword id="KW-0547">Nucleotide-binding</keyword>
<dbReference type="EC" id="6.3.2.2" evidence="1"/>
<dbReference type="EMBL" id="CP000076">
    <property type="protein sequence ID" value="AAY95684.1"/>
    <property type="molecule type" value="Genomic_DNA"/>
</dbReference>
<dbReference type="SMR" id="Q4KK14"/>
<dbReference type="STRING" id="220664.PFL_0273"/>
<dbReference type="KEGG" id="pfl:PFL_0273"/>
<dbReference type="eggNOG" id="COG2918">
    <property type="taxonomic scope" value="Bacteria"/>
</dbReference>
<dbReference type="HOGENOM" id="CLU_020728_3_0_6"/>
<dbReference type="UniPathway" id="UPA00142">
    <property type="reaction ID" value="UER00209"/>
</dbReference>
<dbReference type="Proteomes" id="UP000008540">
    <property type="component" value="Chromosome"/>
</dbReference>
<dbReference type="GO" id="GO:0005829">
    <property type="term" value="C:cytosol"/>
    <property type="evidence" value="ECO:0007669"/>
    <property type="project" value="TreeGrafter"/>
</dbReference>
<dbReference type="GO" id="GO:0005524">
    <property type="term" value="F:ATP binding"/>
    <property type="evidence" value="ECO:0007669"/>
    <property type="project" value="UniProtKB-KW"/>
</dbReference>
<dbReference type="GO" id="GO:0004357">
    <property type="term" value="F:glutamate-cysteine ligase activity"/>
    <property type="evidence" value="ECO:0007669"/>
    <property type="project" value="UniProtKB-UniRule"/>
</dbReference>
<dbReference type="GO" id="GO:0046872">
    <property type="term" value="F:metal ion binding"/>
    <property type="evidence" value="ECO:0007669"/>
    <property type="project" value="TreeGrafter"/>
</dbReference>
<dbReference type="GO" id="GO:0006750">
    <property type="term" value="P:glutathione biosynthetic process"/>
    <property type="evidence" value="ECO:0007669"/>
    <property type="project" value="UniProtKB-UniRule"/>
</dbReference>
<dbReference type="Gene3D" id="3.30.590.20">
    <property type="match status" value="1"/>
</dbReference>
<dbReference type="HAMAP" id="MF_00578">
    <property type="entry name" value="Glu_cys_ligase"/>
    <property type="match status" value="1"/>
</dbReference>
<dbReference type="InterPro" id="IPR014746">
    <property type="entry name" value="Gln_synth/guanido_kin_cat_dom"/>
</dbReference>
<dbReference type="InterPro" id="IPR007370">
    <property type="entry name" value="Glu_cys_ligase"/>
</dbReference>
<dbReference type="InterPro" id="IPR006334">
    <property type="entry name" value="Glut_cys_ligase"/>
</dbReference>
<dbReference type="NCBIfam" id="TIGR01434">
    <property type="entry name" value="glu_cys_ligase"/>
    <property type="match status" value="1"/>
</dbReference>
<dbReference type="PANTHER" id="PTHR38761">
    <property type="entry name" value="GLUTAMATE--CYSTEINE LIGASE"/>
    <property type="match status" value="1"/>
</dbReference>
<dbReference type="PANTHER" id="PTHR38761:SF1">
    <property type="entry name" value="GLUTAMATE--CYSTEINE LIGASE"/>
    <property type="match status" value="1"/>
</dbReference>
<dbReference type="Pfam" id="PF04262">
    <property type="entry name" value="Glu_cys_ligase"/>
    <property type="match status" value="1"/>
</dbReference>
<dbReference type="SUPFAM" id="SSF55931">
    <property type="entry name" value="Glutamine synthetase/guanido kinase"/>
    <property type="match status" value="1"/>
</dbReference>
<gene>
    <name evidence="1" type="primary">gshA</name>
    <name type="ordered locus">PFL_0273</name>
</gene>
<evidence type="ECO:0000255" key="1">
    <source>
        <dbReference type="HAMAP-Rule" id="MF_00578"/>
    </source>
</evidence>